<proteinExistence type="inferred from homology"/>
<keyword id="KW-0067">ATP-binding</keyword>
<keyword id="KW-0143">Chaperone</keyword>
<keyword id="KW-0547">Nucleotide-binding</keyword>
<keyword id="KW-0597">Phosphoprotein</keyword>
<keyword id="KW-1185">Reference proteome</keyword>
<keyword id="KW-0346">Stress response</keyword>
<name>DNAK_AZOPC</name>
<evidence type="ECO:0000255" key="1">
    <source>
        <dbReference type="HAMAP-Rule" id="MF_00332"/>
    </source>
</evidence>
<evidence type="ECO:0000256" key="2">
    <source>
        <dbReference type="SAM" id="MobiDB-lite"/>
    </source>
</evidence>
<reference key="1">
    <citation type="journal article" date="2008" name="Science">
        <title>Genome of an endosymbiont coupling N2 fixation to cellulolysis within RT protist cells in termite gut.</title>
        <authorList>
            <person name="Hongoh Y."/>
            <person name="Sharma V.K."/>
            <person name="Prakash T."/>
            <person name="Noda S."/>
            <person name="Toh H."/>
            <person name="Taylor T.D."/>
            <person name="Kudo T."/>
            <person name="Sakaki Y."/>
            <person name="Toyoda A."/>
            <person name="Hattori M."/>
            <person name="Ohkuma M."/>
        </authorList>
    </citation>
    <scope>NUCLEOTIDE SEQUENCE [LARGE SCALE GENOMIC DNA]</scope>
</reference>
<dbReference type="EMBL" id="AP010656">
    <property type="protein sequence ID" value="BAG83779.1"/>
    <property type="molecule type" value="Genomic_DNA"/>
</dbReference>
<dbReference type="RefSeq" id="WP_012573540.1">
    <property type="nucleotide sequence ID" value="NC_011565.1"/>
</dbReference>
<dbReference type="SMR" id="B6YRF7"/>
<dbReference type="STRING" id="511995.CFPG_516"/>
<dbReference type="KEGG" id="aps:CFPG_516"/>
<dbReference type="eggNOG" id="COG0443">
    <property type="taxonomic scope" value="Bacteria"/>
</dbReference>
<dbReference type="HOGENOM" id="CLU_005965_2_4_10"/>
<dbReference type="OrthoDB" id="9766019at2"/>
<dbReference type="Proteomes" id="UP000000723">
    <property type="component" value="Chromosome"/>
</dbReference>
<dbReference type="GO" id="GO:0005524">
    <property type="term" value="F:ATP binding"/>
    <property type="evidence" value="ECO:0007669"/>
    <property type="project" value="UniProtKB-UniRule"/>
</dbReference>
<dbReference type="GO" id="GO:0140662">
    <property type="term" value="F:ATP-dependent protein folding chaperone"/>
    <property type="evidence" value="ECO:0007669"/>
    <property type="project" value="InterPro"/>
</dbReference>
<dbReference type="GO" id="GO:0051082">
    <property type="term" value="F:unfolded protein binding"/>
    <property type="evidence" value="ECO:0007669"/>
    <property type="project" value="InterPro"/>
</dbReference>
<dbReference type="CDD" id="cd10234">
    <property type="entry name" value="ASKHA_NBD_HSP70_DnaK-like"/>
    <property type="match status" value="1"/>
</dbReference>
<dbReference type="FunFam" id="2.60.34.10:FF:000014">
    <property type="entry name" value="Chaperone protein DnaK HSP70"/>
    <property type="match status" value="1"/>
</dbReference>
<dbReference type="FunFam" id="1.20.1270.10:FF:000001">
    <property type="entry name" value="Molecular chaperone DnaK"/>
    <property type="match status" value="1"/>
</dbReference>
<dbReference type="FunFam" id="3.30.420.40:FF:000004">
    <property type="entry name" value="Molecular chaperone DnaK"/>
    <property type="match status" value="1"/>
</dbReference>
<dbReference type="FunFam" id="3.90.640.10:FF:000003">
    <property type="entry name" value="Molecular chaperone DnaK"/>
    <property type="match status" value="1"/>
</dbReference>
<dbReference type="Gene3D" id="1.20.1270.10">
    <property type="match status" value="1"/>
</dbReference>
<dbReference type="Gene3D" id="3.30.420.40">
    <property type="match status" value="2"/>
</dbReference>
<dbReference type="Gene3D" id="3.90.640.10">
    <property type="entry name" value="Actin, Chain A, domain 4"/>
    <property type="match status" value="1"/>
</dbReference>
<dbReference type="Gene3D" id="2.60.34.10">
    <property type="entry name" value="Substrate Binding Domain Of DNAk, Chain A, domain 1"/>
    <property type="match status" value="1"/>
</dbReference>
<dbReference type="HAMAP" id="MF_00332">
    <property type="entry name" value="DnaK"/>
    <property type="match status" value="1"/>
</dbReference>
<dbReference type="InterPro" id="IPR043129">
    <property type="entry name" value="ATPase_NBD"/>
</dbReference>
<dbReference type="InterPro" id="IPR012725">
    <property type="entry name" value="Chaperone_DnaK"/>
</dbReference>
<dbReference type="InterPro" id="IPR018181">
    <property type="entry name" value="Heat_shock_70_CS"/>
</dbReference>
<dbReference type="InterPro" id="IPR029048">
    <property type="entry name" value="HSP70_C_sf"/>
</dbReference>
<dbReference type="InterPro" id="IPR029047">
    <property type="entry name" value="HSP70_peptide-bd_sf"/>
</dbReference>
<dbReference type="InterPro" id="IPR013126">
    <property type="entry name" value="Hsp_70_fam"/>
</dbReference>
<dbReference type="NCBIfam" id="NF001413">
    <property type="entry name" value="PRK00290.1"/>
    <property type="match status" value="1"/>
</dbReference>
<dbReference type="NCBIfam" id="NF003520">
    <property type="entry name" value="PRK05183.1"/>
    <property type="match status" value="1"/>
</dbReference>
<dbReference type="NCBIfam" id="TIGR02350">
    <property type="entry name" value="prok_dnaK"/>
    <property type="match status" value="1"/>
</dbReference>
<dbReference type="PANTHER" id="PTHR19375">
    <property type="entry name" value="HEAT SHOCK PROTEIN 70KDA"/>
    <property type="match status" value="1"/>
</dbReference>
<dbReference type="Pfam" id="PF00012">
    <property type="entry name" value="HSP70"/>
    <property type="match status" value="1"/>
</dbReference>
<dbReference type="PRINTS" id="PR00301">
    <property type="entry name" value="HEATSHOCK70"/>
</dbReference>
<dbReference type="SUPFAM" id="SSF53067">
    <property type="entry name" value="Actin-like ATPase domain"/>
    <property type="match status" value="2"/>
</dbReference>
<dbReference type="SUPFAM" id="SSF100934">
    <property type="entry name" value="Heat shock protein 70kD (HSP70), C-terminal subdomain"/>
    <property type="match status" value="1"/>
</dbReference>
<dbReference type="SUPFAM" id="SSF100920">
    <property type="entry name" value="Heat shock protein 70kD (HSP70), peptide-binding domain"/>
    <property type="match status" value="1"/>
</dbReference>
<dbReference type="PROSITE" id="PS00297">
    <property type="entry name" value="HSP70_1"/>
    <property type="match status" value="1"/>
</dbReference>
<dbReference type="PROSITE" id="PS00329">
    <property type="entry name" value="HSP70_2"/>
    <property type="match status" value="1"/>
</dbReference>
<dbReference type="PROSITE" id="PS01036">
    <property type="entry name" value="HSP70_3"/>
    <property type="match status" value="1"/>
</dbReference>
<feature type="chain" id="PRO_1000119664" description="Chaperone protein DnaK">
    <location>
        <begin position="1"/>
        <end position="641"/>
    </location>
</feature>
<feature type="region of interest" description="Disordered" evidence="2">
    <location>
        <begin position="604"/>
        <end position="641"/>
    </location>
</feature>
<feature type="compositionally biased region" description="Low complexity" evidence="2">
    <location>
        <begin position="604"/>
        <end position="634"/>
    </location>
</feature>
<feature type="modified residue" description="Phosphothreonine; by autocatalysis" evidence="1">
    <location>
        <position position="196"/>
    </location>
</feature>
<gene>
    <name evidence="1" type="primary">dnaK</name>
    <name type="ordered locus">CFPG_516</name>
</gene>
<sequence length="641" mass="69158">MGKIIGIDLGTTNSCVAVMEGGKPVVIPNSEGKMTTPSIVAFVGSERKIGDPAKRQAITNPTKTIFSIKRFMGESYDKVQNEINRIPYKVTRGGNDTSRVDIDGRLYSPQEISAMILQKMKKTAEDYLGQEVTEAVITVPAYFGDSQRQATIEAGEIAGLKVKRIINEPTAAALAYGLEKADKDMKIAVFDLGGGTFDISILELGSGVFEVLSTNGDTHLGGDDFDHVIIDFLADEFQRNEGLDLRKDAMAMQRLKEAAEKAKIELSSSTSTEINLPYIMPVDGMPKHLIVTLTRSKFEQLSDKLIRSTVDPCEKALKGAGLTAKDINEIILVGGSTRIPIIQTEVEKIFGKVPSKGVNPDEVVAVGAAIQGAILSGDSNLGEMVLLDVTPLSLGIETMGSVMTKLIEANSTIPIKKSETFTTAADNQPSVEIHVLQGERPLAKDNKTIGKFHLDGIMPAPRGIPQIEVTFDIDANGVVSVSAKDKATGKEQSIRIEASSGLSEAEIKRMKEEATANAEADTKAKERVDKLNHADSVIFQTEKQLKDFGDKIPADKKASIEATLTKLKEAHKAQDLSSIDTIIAEINNTFQAMSQELYNAKAQTNNSAGNNNSAGNNTQNNNNASDNNNNNVTDVDFEEVK</sequence>
<protein>
    <recommendedName>
        <fullName evidence="1">Chaperone protein DnaK</fullName>
    </recommendedName>
    <alternativeName>
        <fullName evidence="1">HSP70</fullName>
    </alternativeName>
    <alternativeName>
        <fullName evidence="1">Heat shock 70 kDa protein</fullName>
    </alternativeName>
    <alternativeName>
        <fullName evidence="1">Heat shock protein 70</fullName>
    </alternativeName>
</protein>
<comment type="function">
    <text evidence="1">Acts as a chaperone.</text>
</comment>
<comment type="induction">
    <text evidence="1">By stress conditions e.g. heat shock.</text>
</comment>
<comment type="similarity">
    <text evidence="1">Belongs to the heat shock protein 70 family.</text>
</comment>
<accession>B6YRF7</accession>
<organism>
    <name type="scientific">Azobacteroides pseudotrichonymphae genomovar. CFP2</name>
    <dbReference type="NCBI Taxonomy" id="511995"/>
    <lineage>
        <taxon>Bacteria</taxon>
        <taxon>Pseudomonadati</taxon>
        <taxon>Bacteroidota</taxon>
        <taxon>Bacteroidia</taxon>
        <taxon>Bacteroidales</taxon>
        <taxon>Candidatus Azobacteroides</taxon>
    </lineage>
</organism>